<keyword id="KW-0028">Amino-acid biosynthesis</keyword>
<keyword id="KW-0963">Cytoplasm</keyword>
<keyword id="KW-0368">Histidine biosynthesis</keyword>
<keyword id="KW-0456">Lyase</keyword>
<keyword id="KW-1185">Reference proteome</keyword>
<dbReference type="EC" id="4.3.2.10" evidence="1"/>
<dbReference type="EMBL" id="CP001339">
    <property type="protein sequence ID" value="ACL71315.1"/>
    <property type="molecule type" value="Genomic_DNA"/>
</dbReference>
<dbReference type="RefSeq" id="WP_012636804.1">
    <property type="nucleotide sequence ID" value="NC_011901.1"/>
</dbReference>
<dbReference type="SMR" id="B8GU32"/>
<dbReference type="STRING" id="396588.Tgr7_0216"/>
<dbReference type="KEGG" id="tgr:Tgr7_0216"/>
<dbReference type="eggNOG" id="COG0107">
    <property type="taxonomic scope" value="Bacteria"/>
</dbReference>
<dbReference type="HOGENOM" id="CLU_048577_4_0_6"/>
<dbReference type="OrthoDB" id="9781903at2"/>
<dbReference type="UniPathway" id="UPA00031">
    <property type="reaction ID" value="UER00010"/>
</dbReference>
<dbReference type="Proteomes" id="UP000002383">
    <property type="component" value="Chromosome"/>
</dbReference>
<dbReference type="GO" id="GO:0005737">
    <property type="term" value="C:cytoplasm"/>
    <property type="evidence" value="ECO:0007669"/>
    <property type="project" value="UniProtKB-SubCell"/>
</dbReference>
<dbReference type="GO" id="GO:0000107">
    <property type="term" value="F:imidazoleglycerol-phosphate synthase activity"/>
    <property type="evidence" value="ECO:0007669"/>
    <property type="project" value="UniProtKB-UniRule"/>
</dbReference>
<dbReference type="GO" id="GO:0016829">
    <property type="term" value="F:lyase activity"/>
    <property type="evidence" value="ECO:0007669"/>
    <property type="project" value="UniProtKB-KW"/>
</dbReference>
<dbReference type="GO" id="GO:0000105">
    <property type="term" value="P:L-histidine biosynthetic process"/>
    <property type="evidence" value="ECO:0007669"/>
    <property type="project" value="UniProtKB-UniRule"/>
</dbReference>
<dbReference type="CDD" id="cd04731">
    <property type="entry name" value="HisF"/>
    <property type="match status" value="1"/>
</dbReference>
<dbReference type="FunFam" id="3.20.20.70:FF:000006">
    <property type="entry name" value="Imidazole glycerol phosphate synthase subunit HisF"/>
    <property type="match status" value="1"/>
</dbReference>
<dbReference type="Gene3D" id="3.20.20.70">
    <property type="entry name" value="Aldolase class I"/>
    <property type="match status" value="1"/>
</dbReference>
<dbReference type="HAMAP" id="MF_01013">
    <property type="entry name" value="HisF"/>
    <property type="match status" value="1"/>
</dbReference>
<dbReference type="InterPro" id="IPR013785">
    <property type="entry name" value="Aldolase_TIM"/>
</dbReference>
<dbReference type="InterPro" id="IPR006062">
    <property type="entry name" value="His_biosynth"/>
</dbReference>
<dbReference type="InterPro" id="IPR004651">
    <property type="entry name" value="HisF"/>
</dbReference>
<dbReference type="InterPro" id="IPR050064">
    <property type="entry name" value="IGPS_HisA/HisF"/>
</dbReference>
<dbReference type="InterPro" id="IPR011060">
    <property type="entry name" value="RibuloseP-bd_barrel"/>
</dbReference>
<dbReference type="NCBIfam" id="TIGR00735">
    <property type="entry name" value="hisF"/>
    <property type="match status" value="1"/>
</dbReference>
<dbReference type="PANTHER" id="PTHR21235:SF2">
    <property type="entry name" value="IMIDAZOLE GLYCEROL PHOSPHATE SYNTHASE HISHF"/>
    <property type="match status" value="1"/>
</dbReference>
<dbReference type="PANTHER" id="PTHR21235">
    <property type="entry name" value="IMIDAZOLE GLYCEROL PHOSPHATE SYNTHASE SUBUNIT HISF/H IGP SYNTHASE SUBUNIT HISF/H"/>
    <property type="match status" value="1"/>
</dbReference>
<dbReference type="Pfam" id="PF00977">
    <property type="entry name" value="His_biosynth"/>
    <property type="match status" value="1"/>
</dbReference>
<dbReference type="SUPFAM" id="SSF51366">
    <property type="entry name" value="Ribulose-phoshate binding barrel"/>
    <property type="match status" value="1"/>
</dbReference>
<feature type="chain" id="PRO_1000148942" description="Imidazole glycerol phosphate synthase subunit HisF">
    <location>
        <begin position="1"/>
        <end position="256"/>
    </location>
</feature>
<feature type="active site" evidence="1">
    <location>
        <position position="11"/>
    </location>
</feature>
<feature type="active site" evidence="1">
    <location>
        <position position="130"/>
    </location>
</feature>
<name>HIS6_THISH</name>
<proteinExistence type="inferred from homology"/>
<comment type="function">
    <text evidence="1">IGPS catalyzes the conversion of PRFAR and glutamine to IGP, AICAR and glutamate. The HisF subunit catalyzes the cyclization activity that produces IGP and AICAR from PRFAR using the ammonia provided by the HisH subunit.</text>
</comment>
<comment type="catalytic activity">
    <reaction evidence="1">
        <text>5-[(5-phospho-1-deoxy-D-ribulos-1-ylimino)methylamino]-1-(5-phospho-beta-D-ribosyl)imidazole-4-carboxamide + L-glutamine = D-erythro-1-(imidazol-4-yl)glycerol 3-phosphate + 5-amino-1-(5-phospho-beta-D-ribosyl)imidazole-4-carboxamide + L-glutamate + H(+)</text>
        <dbReference type="Rhea" id="RHEA:24793"/>
        <dbReference type="ChEBI" id="CHEBI:15378"/>
        <dbReference type="ChEBI" id="CHEBI:29985"/>
        <dbReference type="ChEBI" id="CHEBI:58278"/>
        <dbReference type="ChEBI" id="CHEBI:58359"/>
        <dbReference type="ChEBI" id="CHEBI:58475"/>
        <dbReference type="ChEBI" id="CHEBI:58525"/>
        <dbReference type="EC" id="4.3.2.10"/>
    </reaction>
</comment>
<comment type="pathway">
    <text evidence="1">Amino-acid biosynthesis; L-histidine biosynthesis; L-histidine from 5-phospho-alpha-D-ribose 1-diphosphate: step 5/9.</text>
</comment>
<comment type="subunit">
    <text evidence="1">Heterodimer of HisH and HisF.</text>
</comment>
<comment type="subcellular location">
    <subcellularLocation>
        <location evidence="1">Cytoplasm</location>
    </subcellularLocation>
</comment>
<comment type="similarity">
    <text evidence="1">Belongs to the HisA/HisF family.</text>
</comment>
<protein>
    <recommendedName>
        <fullName evidence="1">Imidazole glycerol phosphate synthase subunit HisF</fullName>
        <ecNumber evidence="1">4.3.2.10</ecNumber>
    </recommendedName>
    <alternativeName>
        <fullName evidence="1">IGP synthase cyclase subunit</fullName>
    </alternativeName>
    <alternativeName>
        <fullName evidence="1">IGP synthase subunit HisF</fullName>
    </alternativeName>
    <alternativeName>
        <fullName evidence="1">ImGP synthase subunit HisF</fullName>
        <shortName evidence="1">IGPS subunit HisF</shortName>
    </alternativeName>
</protein>
<gene>
    <name evidence="1" type="primary">hisF</name>
    <name type="ordered locus">Tgr7_0216</name>
</gene>
<organism>
    <name type="scientific">Thioalkalivibrio sulfidiphilus (strain HL-EbGR7)</name>
    <dbReference type="NCBI Taxonomy" id="396588"/>
    <lineage>
        <taxon>Bacteria</taxon>
        <taxon>Pseudomonadati</taxon>
        <taxon>Pseudomonadota</taxon>
        <taxon>Gammaproteobacteria</taxon>
        <taxon>Chromatiales</taxon>
        <taxon>Ectothiorhodospiraceae</taxon>
        <taxon>Thioalkalivibrio</taxon>
    </lineage>
</organism>
<reference key="1">
    <citation type="journal article" date="2011" name="Stand. Genomic Sci.">
        <title>Complete genome sequence of 'Thioalkalivibrio sulfidophilus' HL-EbGr7.</title>
        <authorList>
            <person name="Muyzer G."/>
            <person name="Sorokin D.Y."/>
            <person name="Mavromatis K."/>
            <person name="Lapidus A."/>
            <person name="Clum A."/>
            <person name="Ivanova N."/>
            <person name="Pati A."/>
            <person name="d'Haeseleer P."/>
            <person name="Woyke T."/>
            <person name="Kyrpides N.C."/>
        </authorList>
    </citation>
    <scope>NUCLEOTIDE SEQUENCE [LARGE SCALE GENOMIC DNA]</scope>
    <source>
        <strain>HL-EbGR7</strain>
    </source>
</reference>
<accession>B8GU32</accession>
<sequence length="256" mass="27615">MLAKRIIPCLDVDNGRVVKGVNFVEIRDAGDPVEIARRYDAEGADEITFLDITASHDERETMVHVVEQVATEVFIPLTVGGGIRRMEDIRRLLNAGADKVSINTAAVFNPDFVREAADKVGSQCIVVAIDAKRVSGPGEADRWEIFTHGGRKPTGLDAVDWARRMVECGAGEILLTSMDRDGTKSGFDIELTRAVSDAVRVPVIASGGVGTLQHLVDGVTRGHADAVLAASIFHFGQHTVGEAKQFMAEQGVEVRL</sequence>
<evidence type="ECO:0000255" key="1">
    <source>
        <dbReference type="HAMAP-Rule" id="MF_01013"/>
    </source>
</evidence>